<gene>
    <name evidence="1" type="primary">cobS</name>
    <name type="ordered locus">SSPA0799</name>
</gene>
<comment type="function">
    <text evidence="1">Joins adenosylcobinamide-GDP and alpha-ribazole to generate adenosylcobalamin (Ado-cobalamin). Also synthesizes adenosylcobalamin 5'-phosphate from adenosylcobinamide-GDP and alpha-ribazole 5'-phosphate.</text>
</comment>
<comment type="catalytic activity">
    <reaction evidence="1">
        <text>alpha-ribazole + adenosylcob(III)inamide-GDP = adenosylcob(III)alamin + GMP + H(+)</text>
        <dbReference type="Rhea" id="RHEA:16049"/>
        <dbReference type="ChEBI" id="CHEBI:10329"/>
        <dbReference type="ChEBI" id="CHEBI:15378"/>
        <dbReference type="ChEBI" id="CHEBI:18408"/>
        <dbReference type="ChEBI" id="CHEBI:58115"/>
        <dbReference type="ChEBI" id="CHEBI:60487"/>
        <dbReference type="EC" id="2.7.8.26"/>
    </reaction>
</comment>
<comment type="catalytic activity">
    <reaction evidence="1">
        <text>alpha-ribazole 5'-phosphate + adenosylcob(III)inamide-GDP = adenosylcob(III)alamin 5'-phosphate + GMP + H(+)</text>
        <dbReference type="Rhea" id="RHEA:23560"/>
        <dbReference type="ChEBI" id="CHEBI:15378"/>
        <dbReference type="ChEBI" id="CHEBI:57918"/>
        <dbReference type="ChEBI" id="CHEBI:58115"/>
        <dbReference type="ChEBI" id="CHEBI:60487"/>
        <dbReference type="ChEBI" id="CHEBI:60493"/>
        <dbReference type="EC" id="2.7.8.26"/>
    </reaction>
</comment>
<comment type="cofactor">
    <cofactor evidence="1">
        <name>Mg(2+)</name>
        <dbReference type="ChEBI" id="CHEBI:18420"/>
    </cofactor>
</comment>
<comment type="pathway">
    <text evidence="1">Cofactor biosynthesis; adenosylcobalamin biosynthesis; adenosylcobalamin from cob(II)yrinate a,c-diamide: step 7/7.</text>
</comment>
<comment type="subcellular location">
    <subcellularLocation>
        <location evidence="1">Cell inner membrane</location>
        <topology evidence="1">Multi-pass membrane protein</topology>
    </subcellularLocation>
</comment>
<comment type="similarity">
    <text evidence="1">Belongs to the CobS family.</text>
</comment>
<proteinExistence type="inferred from homology"/>
<sequence>MSKLFWAMLAFISRLPVPSRWSQGLDFEQYSRGIVMFPFIGLILGGISGLIFILLQSWCGIPLAALFCILALALLTGGFHLDGLADTCDGIFSARRRERMLEIMRDSRLGTHGGLALIFVLLAKILVVSELALRGTPMLAALAVACAAGHGSAVLLMYRHRYAREEGLGNVFIGKVSGRQTCITLGLAVIVATVLLPGMQGLATMVVTLAAIFILGQLLKRTLGGQTGDTLGAAIELGELIFLLALL</sequence>
<accession>B5BG59</accession>
<feature type="chain" id="PRO_1000132601" description="Adenosylcobinamide-GDP ribazoletransferase">
    <location>
        <begin position="1"/>
        <end position="247"/>
    </location>
</feature>
<feature type="transmembrane region" description="Helical" evidence="1">
    <location>
        <begin position="34"/>
        <end position="54"/>
    </location>
</feature>
<feature type="transmembrane region" description="Helical" evidence="1">
    <location>
        <begin position="59"/>
        <end position="79"/>
    </location>
</feature>
<feature type="transmembrane region" description="Helical" evidence="1">
    <location>
        <begin position="113"/>
        <end position="133"/>
    </location>
</feature>
<feature type="transmembrane region" description="Helical" evidence="1">
    <location>
        <begin position="138"/>
        <end position="158"/>
    </location>
</feature>
<feature type="transmembrane region" description="Helical" evidence="1">
    <location>
        <begin position="171"/>
        <end position="191"/>
    </location>
</feature>
<feature type="transmembrane region" description="Helical" evidence="1">
    <location>
        <begin position="194"/>
        <end position="214"/>
    </location>
</feature>
<name>COBS_SALPK</name>
<reference key="1">
    <citation type="journal article" date="2009" name="BMC Genomics">
        <title>Pseudogene accumulation in the evolutionary histories of Salmonella enterica serovars Paratyphi A and Typhi.</title>
        <authorList>
            <person name="Holt K.E."/>
            <person name="Thomson N.R."/>
            <person name="Wain J."/>
            <person name="Langridge G.C."/>
            <person name="Hasan R."/>
            <person name="Bhutta Z.A."/>
            <person name="Quail M.A."/>
            <person name="Norbertczak H."/>
            <person name="Walker D."/>
            <person name="Simmonds M."/>
            <person name="White B."/>
            <person name="Bason N."/>
            <person name="Mungall K."/>
            <person name="Dougan G."/>
            <person name="Parkhill J."/>
        </authorList>
    </citation>
    <scope>NUCLEOTIDE SEQUENCE [LARGE SCALE GENOMIC DNA]</scope>
    <source>
        <strain>AKU_12601</strain>
    </source>
</reference>
<protein>
    <recommendedName>
        <fullName evidence="1">Adenosylcobinamide-GDP ribazoletransferase</fullName>
        <ecNumber evidence="1">2.7.8.26</ecNumber>
    </recommendedName>
    <alternativeName>
        <fullName evidence="1">Cobalamin synthase</fullName>
    </alternativeName>
    <alternativeName>
        <fullName evidence="1">Cobalamin-5'-phosphate synthase</fullName>
    </alternativeName>
</protein>
<keyword id="KW-0997">Cell inner membrane</keyword>
<keyword id="KW-1003">Cell membrane</keyword>
<keyword id="KW-0169">Cobalamin biosynthesis</keyword>
<keyword id="KW-0460">Magnesium</keyword>
<keyword id="KW-0472">Membrane</keyword>
<keyword id="KW-0808">Transferase</keyword>
<keyword id="KW-0812">Transmembrane</keyword>
<keyword id="KW-1133">Transmembrane helix</keyword>
<dbReference type="EC" id="2.7.8.26" evidence="1"/>
<dbReference type="EMBL" id="FM200053">
    <property type="protein sequence ID" value="CAR58940.1"/>
    <property type="molecule type" value="Genomic_DNA"/>
</dbReference>
<dbReference type="RefSeq" id="WP_000039990.1">
    <property type="nucleotide sequence ID" value="NC_011147.1"/>
</dbReference>
<dbReference type="KEGG" id="sek:SSPA0799"/>
<dbReference type="HOGENOM" id="CLU_057426_1_2_6"/>
<dbReference type="UniPathway" id="UPA00148">
    <property type="reaction ID" value="UER00238"/>
</dbReference>
<dbReference type="Proteomes" id="UP000001869">
    <property type="component" value="Chromosome"/>
</dbReference>
<dbReference type="GO" id="GO:0005886">
    <property type="term" value="C:plasma membrane"/>
    <property type="evidence" value="ECO:0007669"/>
    <property type="project" value="UniProtKB-SubCell"/>
</dbReference>
<dbReference type="GO" id="GO:0051073">
    <property type="term" value="F:adenosylcobinamide-GDP ribazoletransferase activity"/>
    <property type="evidence" value="ECO:0007669"/>
    <property type="project" value="UniProtKB-UniRule"/>
</dbReference>
<dbReference type="GO" id="GO:0008818">
    <property type="term" value="F:cobalamin 5'-phosphate synthase activity"/>
    <property type="evidence" value="ECO:0007669"/>
    <property type="project" value="UniProtKB-UniRule"/>
</dbReference>
<dbReference type="GO" id="GO:0009236">
    <property type="term" value="P:cobalamin biosynthetic process"/>
    <property type="evidence" value="ECO:0007669"/>
    <property type="project" value="UniProtKB-UniRule"/>
</dbReference>
<dbReference type="HAMAP" id="MF_00719">
    <property type="entry name" value="CobS"/>
    <property type="match status" value="1"/>
</dbReference>
<dbReference type="InterPro" id="IPR003805">
    <property type="entry name" value="CobS"/>
</dbReference>
<dbReference type="NCBIfam" id="TIGR00317">
    <property type="entry name" value="cobS"/>
    <property type="match status" value="1"/>
</dbReference>
<dbReference type="PANTHER" id="PTHR34148">
    <property type="entry name" value="ADENOSYLCOBINAMIDE-GDP RIBAZOLETRANSFERASE"/>
    <property type="match status" value="1"/>
</dbReference>
<dbReference type="PANTHER" id="PTHR34148:SF1">
    <property type="entry name" value="ADENOSYLCOBINAMIDE-GDP RIBAZOLETRANSFERASE"/>
    <property type="match status" value="1"/>
</dbReference>
<dbReference type="Pfam" id="PF02654">
    <property type="entry name" value="CobS"/>
    <property type="match status" value="1"/>
</dbReference>
<evidence type="ECO:0000255" key="1">
    <source>
        <dbReference type="HAMAP-Rule" id="MF_00719"/>
    </source>
</evidence>
<organism>
    <name type="scientific">Salmonella paratyphi A (strain AKU_12601)</name>
    <dbReference type="NCBI Taxonomy" id="554290"/>
    <lineage>
        <taxon>Bacteria</taxon>
        <taxon>Pseudomonadati</taxon>
        <taxon>Pseudomonadota</taxon>
        <taxon>Gammaproteobacteria</taxon>
        <taxon>Enterobacterales</taxon>
        <taxon>Enterobacteriaceae</taxon>
        <taxon>Salmonella</taxon>
    </lineage>
</organism>